<proteinExistence type="evidence at protein level"/>
<evidence type="ECO:0000255" key="1"/>
<evidence type="ECO:0000256" key="2">
    <source>
        <dbReference type="SAM" id="MobiDB-lite"/>
    </source>
</evidence>
<evidence type="ECO:0000269" key="3">
    <source>
    </source>
</evidence>
<evidence type="ECO:0000269" key="4">
    <source>
    </source>
</evidence>
<evidence type="ECO:0000269" key="5">
    <source>
    </source>
</evidence>
<evidence type="ECO:0000269" key="6">
    <source>
    </source>
</evidence>
<evidence type="ECO:0000269" key="7">
    <source>
    </source>
</evidence>
<evidence type="ECO:0000269" key="8">
    <source>
    </source>
</evidence>
<evidence type="ECO:0000269" key="9">
    <source>
    </source>
</evidence>
<evidence type="ECO:0000269" key="10">
    <source ref="6"/>
</evidence>
<evidence type="ECO:0000303" key="11">
    <source>
    </source>
</evidence>
<evidence type="ECO:0000305" key="12"/>
<evidence type="ECO:0000305" key="13">
    <source>
    </source>
</evidence>
<evidence type="ECO:0000312" key="14">
    <source>
        <dbReference type="HGNC" id="HGNC:24291"/>
    </source>
</evidence>
<keyword id="KW-0025">Alternative splicing</keyword>
<keyword id="KW-0963">Cytoplasm</keyword>
<keyword id="KW-0325">Glycoprotein</keyword>
<keyword id="KW-0333">Golgi apparatus</keyword>
<keyword id="KW-0472">Membrane</keyword>
<keyword id="KW-0479">Metal-binding</keyword>
<keyword id="KW-0496">Mitochondrion</keyword>
<keyword id="KW-1267">Proteomics identification</keyword>
<keyword id="KW-1185">Reference proteome</keyword>
<keyword id="KW-0735">Signal-anchor</keyword>
<keyword id="KW-0808">Transferase</keyword>
<keyword id="KW-0812">Transmembrane</keyword>
<keyword id="KW-1133">Transmembrane helix</keyword>
<accession>Q8IZ52</accession>
<accession>B4DXU0</accession>
<accession>Q6UXD6</accession>
<accession>Q7L4G1</accession>
<accession>Q9H0F8</accession>
<accession>Q9H618</accession>
<reference key="1">
    <citation type="journal article" date="2003" name="J. Biol. Chem.">
        <title>Molecular cloning of a chondroitin polymerizing factor that cooperates with chondroitin synthase for chondroitin polymerization.</title>
        <authorList>
            <person name="Kitagawa H."/>
            <person name="Izumikawa T."/>
            <person name="Uyama T."/>
            <person name="Sugahara K."/>
        </authorList>
    </citation>
    <scope>NUCLEOTIDE SEQUENCE [MRNA] (ISOFORM 1)</scope>
    <scope>TISSUE SPECIFICITY</scope>
    <scope>VARIANT ARG-371</scope>
    <scope>FUNCTION</scope>
</reference>
<reference key="2">
    <citation type="journal article" date="2003" name="J. Biol. Chem.">
        <title>Chondroitin sulfate synthase-2. Molecular cloning and characterization of a novel human glycosyltransferase homologous to chondroitin sulfate glucuronyltransferase, which has dual enzymatic activities.</title>
        <authorList>
            <person name="Yada T."/>
            <person name="Gotoh M."/>
            <person name="Sato T."/>
            <person name="Shionyu M."/>
            <person name="Go M."/>
            <person name="Kaseyama H."/>
            <person name="Iwasaki H."/>
            <person name="Kikuchi N."/>
            <person name="Kwon Y.-D."/>
            <person name="Togayachi A."/>
            <person name="Kudo T."/>
            <person name="Watanabe H."/>
            <person name="Narimatsu H."/>
            <person name="Kimata K."/>
        </authorList>
    </citation>
    <scope>NUCLEOTIDE SEQUENCE [MRNA] (ISOFORM 1)</scope>
    <scope>FUNCTION</scope>
    <scope>COFACTOR</scope>
    <scope>TISSUE SPECIFICITY</scope>
    <scope>VARIANT ARG-371</scope>
    <scope>CATALYTIC ACTIVITY</scope>
</reference>
<reference key="3">
    <citation type="journal article" date="2003" name="Genome Res.">
        <title>The secreted protein discovery initiative (SPDI), a large-scale effort to identify novel human secreted and transmembrane proteins: a bioinformatics assessment.</title>
        <authorList>
            <person name="Clark H.F."/>
            <person name="Gurney A.L."/>
            <person name="Abaya E."/>
            <person name="Baker K."/>
            <person name="Baldwin D.T."/>
            <person name="Brush J."/>
            <person name="Chen J."/>
            <person name="Chow B."/>
            <person name="Chui C."/>
            <person name="Crowley C."/>
            <person name="Currell B."/>
            <person name="Deuel B."/>
            <person name="Dowd P."/>
            <person name="Eaton D."/>
            <person name="Foster J.S."/>
            <person name="Grimaldi C."/>
            <person name="Gu Q."/>
            <person name="Hass P.E."/>
            <person name="Heldens S."/>
            <person name="Huang A."/>
            <person name="Kim H.S."/>
            <person name="Klimowski L."/>
            <person name="Jin Y."/>
            <person name="Johnson S."/>
            <person name="Lee J."/>
            <person name="Lewis L."/>
            <person name="Liao D."/>
            <person name="Mark M.R."/>
            <person name="Robbie E."/>
            <person name="Sanchez C."/>
            <person name="Schoenfeld J."/>
            <person name="Seshagiri S."/>
            <person name="Simmons L."/>
            <person name="Singh J."/>
            <person name="Smith V."/>
            <person name="Stinson J."/>
            <person name="Vagts A."/>
            <person name="Vandlen R.L."/>
            <person name="Watanabe C."/>
            <person name="Wieand D."/>
            <person name="Woods K."/>
            <person name="Xie M.-H."/>
            <person name="Yansura D.G."/>
            <person name="Yi S."/>
            <person name="Yu G."/>
            <person name="Yuan J."/>
            <person name="Zhang M."/>
            <person name="Zhang Z."/>
            <person name="Goddard A.D."/>
            <person name="Wood W.I."/>
            <person name="Godowski P.J."/>
            <person name="Gray A.M."/>
        </authorList>
    </citation>
    <scope>NUCLEOTIDE SEQUENCE [LARGE SCALE MRNA] (ISOFORM 1)</scope>
    <scope>VARIANT ARG-371</scope>
</reference>
<reference key="4">
    <citation type="journal article" date="2004" name="Nat. Genet.">
        <title>Complete sequencing and characterization of 21,243 full-length human cDNAs.</title>
        <authorList>
            <person name="Ota T."/>
            <person name="Suzuki Y."/>
            <person name="Nishikawa T."/>
            <person name="Otsuki T."/>
            <person name="Sugiyama T."/>
            <person name="Irie R."/>
            <person name="Wakamatsu A."/>
            <person name="Hayashi K."/>
            <person name="Sato H."/>
            <person name="Nagai K."/>
            <person name="Kimura K."/>
            <person name="Makita H."/>
            <person name="Sekine M."/>
            <person name="Obayashi M."/>
            <person name="Nishi T."/>
            <person name="Shibahara T."/>
            <person name="Tanaka T."/>
            <person name="Ishii S."/>
            <person name="Yamamoto J."/>
            <person name="Saito K."/>
            <person name="Kawai Y."/>
            <person name="Isono Y."/>
            <person name="Nakamura Y."/>
            <person name="Nagahari K."/>
            <person name="Murakami K."/>
            <person name="Yasuda T."/>
            <person name="Iwayanagi T."/>
            <person name="Wagatsuma M."/>
            <person name="Shiratori A."/>
            <person name="Sudo H."/>
            <person name="Hosoiri T."/>
            <person name="Kaku Y."/>
            <person name="Kodaira H."/>
            <person name="Kondo H."/>
            <person name="Sugawara M."/>
            <person name="Takahashi M."/>
            <person name="Kanda K."/>
            <person name="Yokoi T."/>
            <person name="Furuya T."/>
            <person name="Kikkawa E."/>
            <person name="Omura Y."/>
            <person name="Abe K."/>
            <person name="Kamihara K."/>
            <person name="Katsuta N."/>
            <person name="Sato K."/>
            <person name="Tanikawa M."/>
            <person name="Yamazaki M."/>
            <person name="Ninomiya K."/>
            <person name="Ishibashi T."/>
            <person name="Yamashita H."/>
            <person name="Murakawa K."/>
            <person name="Fujimori K."/>
            <person name="Tanai H."/>
            <person name="Kimata M."/>
            <person name="Watanabe M."/>
            <person name="Hiraoka S."/>
            <person name="Chiba Y."/>
            <person name="Ishida S."/>
            <person name="Ono Y."/>
            <person name="Takiguchi S."/>
            <person name="Watanabe S."/>
            <person name="Yosida M."/>
            <person name="Hotuta T."/>
            <person name="Kusano J."/>
            <person name="Kanehori K."/>
            <person name="Takahashi-Fujii A."/>
            <person name="Hara H."/>
            <person name="Tanase T.-O."/>
            <person name="Nomura Y."/>
            <person name="Togiya S."/>
            <person name="Komai F."/>
            <person name="Hara R."/>
            <person name="Takeuchi K."/>
            <person name="Arita M."/>
            <person name="Imose N."/>
            <person name="Musashino K."/>
            <person name="Yuuki H."/>
            <person name="Oshima A."/>
            <person name="Sasaki N."/>
            <person name="Aotsuka S."/>
            <person name="Yoshikawa Y."/>
            <person name="Matsunawa H."/>
            <person name="Ichihara T."/>
            <person name="Shiohata N."/>
            <person name="Sano S."/>
            <person name="Moriya S."/>
            <person name="Momiyama H."/>
            <person name="Satoh N."/>
            <person name="Takami S."/>
            <person name="Terashima Y."/>
            <person name="Suzuki O."/>
            <person name="Nakagawa S."/>
            <person name="Senoh A."/>
            <person name="Mizoguchi H."/>
            <person name="Goto Y."/>
            <person name="Shimizu F."/>
            <person name="Wakebe H."/>
            <person name="Hishigaki H."/>
            <person name="Watanabe T."/>
            <person name="Sugiyama A."/>
            <person name="Takemoto M."/>
            <person name="Kawakami B."/>
            <person name="Yamazaki M."/>
            <person name="Watanabe K."/>
            <person name="Kumagai A."/>
            <person name="Itakura S."/>
            <person name="Fukuzumi Y."/>
            <person name="Fujimori Y."/>
            <person name="Komiyama M."/>
            <person name="Tashiro H."/>
            <person name="Tanigami A."/>
            <person name="Fujiwara T."/>
            <person name="Ono T."/>
            <person name="Yamada K."/>
            <person name="Fujii Y."/>
            <person name="Ozaki K."/>
            <person name="Hirao M."/>
            <person name="Ohmori Y."/>
            <person name="Kawabata A."/>
            <person name="Hikiji T."/>
            <person name="Kobatake N."/>
            <person name="Inagaki H."/>
            <person name="Ikema Y."/>
            <person name="Okamoto S."/>
            <person name="Okitani R."/>
            <person name="Kawakami T."/>
            <person name="Noguchi S."/>
            <person name="Itoh T."/>
            <person name="Shigeta K."/>
            <person name="Senba T."/>
            <person name="Matsumura K."/>
            <person name="Nakajima Y."/>
            <person name="Mizuno T."/>
            <person name="Morinaga M."/>
            <person name="Sasaki M."/>
            <person name="Togashi T."/>
            <person name="Oyama M."/>
            <person name="Hata H."/>
            <person name="Watanabe M."/>
            <person name="Komatsu T."/>
            <person name="Mizushima-Sugano J."/>
            <person name="Satoh T."/>
            <person name="Shirai Y."/>
            <person name="Takahashi Y."/>
            <person name="Nakagawa K."/>
            <person name="Okumura K."/>
            <person name="Nagase T."/>
            <person name="Nomura N."/>
            <person name="Kikuchi H."/>
            <person name="Masuho Y."/>
            <person name="Yamashita R."/>
            <person name="Nakai K."/>
            <person name="Yada T."/>
            <person name="Nakamura Y."/>
            <person name="Ohara O."/>
            <person name="Isogai T."/>
            <person name="Sugano S."/>
        </authorList>
    </citation>
    <scope>NUCLEOTIDE SEQUENCE [LARGE SCALE MRNA] (ISOFORMS 2 AND 3)</scope>
    <scope>VARIANT ARG-371</scope>
    <source>
        <tissue>Small intestine</tissue>
    </source>
</reference>
<reference key="5">
    <citation type="journal article" date="2005" name="Nature">
        <title>Generation and annotation of the DNA sequences of human chromosomes 2 and 4.</title>
        <authorList>
            <person name="Hillier L.W."/>
            <person name="Graves T.A."/>
            <person name="Fulton R.S."/>
            <person name="Fulton L.A."/>
            <person name="Pepin K.H."/>
            <person name="Minx P."/>
            <person name="Wagner-McPherson C."/>
            <person name="Layman D."/>
            <person name="Wylie K."/>
            <person name="Sekhon M."/>
            <person name="Becker M.C."/>
            <person name="Fewell G.A."/>
            <person name="Delehaunty K.D."/>
            <person name="Miner T.L."/>
            <person name="Nash W.E."/>
            <person name="Kremitzki C."/>
            <person name="Oddy L."/>
            <person name="Du H."/>
            <person name="Sun H."/>
            <person name="Bradshaw-Cordum H."/>
            <person name="Ali J."/>
            <person name="Carter J."/>
            <person name="Cordes M."/>
            <person name="Harris A."/>
            <person name="Isak A."/>
            <person name="van Brunt A."/>
            <person name="Nguyen C."/>
            <person name="Du F."/>
            <person name="Courtney L."/>
            <person name="Kalicki J."/>
            <person name="Ozersky P."/>
            <person name="Abbott S."/>
            <person name="Armstrong J."/>
            <person name="Belter E.A."/>
            <person name="Caruso L."/>
            <person name="Cedroni M."/>
            <person name="Cotton M."/>
            <person name="Davidson T."/>
            <person name="Desai A."/>
            <person name="Elliott G."/>
            <person name="Erb T."/>
            <person name="Fronick C."/>
            <person name="Gaige T."/>
            <person name="Haakenson W."/>
            <person name="Haglund K."/>
            <person name="Holmes A."/>
            <person name="Harkins R."/>
            <person name="Kim K."/>
            <person name="Kruchowski S.S."/>
            <person name="Strong C.M."/>
            <person name="Grewal N."/>
            <person name="Goyea E."/>
            <person name="Hou S."/>
            <person name="Levy A."/>
            <person name="Martinka S."/>
            <person name="Mead K."/>
            <person name="McLellan M.D."/>
            <person name="Meyer R."/>
            <person name="Randall-Maher J."/>
            <person name="Tomlinson C."/>
            <person name="Dauphin-Kohlberg S."/>
            <person name="Kozlowicz-Reilly A."/>
            <person name="Shah N."/>
            <person name="Swearengen-Shahid S."/>
            <person name="Snider J."/>
            <person name="Strong J.T."/>
            <person name="Thompson J."/>
            <person name="Yoakum M."/>
            <person name="Leonard S."/>
            <person name="Pearman C."/>
            <person name="Trani L."/>
            <person name="Radionenko M."/>
            <person name="Waligorski J.E."/>
            <person name="Wang C."/>
            <person name="Rock S.M."/>
            <person name="Tin-Wollam A.-M."/>
            <person name="Maupin R."/>
            <person name="Latreille P."/>
            <person name="Wendl M.C."/>
            <person name="Yang S.-P."/>
            <person name="Pohl C."/>
            <person name="Wallis J.W."/>
            <person name="Spieth J."/>
            <person name="Bieri T.A."/>
            <person name="Berkowicz N."/>
            <person name="Nelson J.O."/>
            <person name="Osborne J."/>
            <person name="Ding L."/>
            <person name="Meyer R."/>
            <person name="Sabo A."/>
            <person name="Shotland Y."/>
            <person name="Sinha P."/>
            <person name="Wohldmann P.E."/>
            <person name="Cook L.L."/>
            <person name="Hickenbotham M.T."/>
            <person name="Eldred J."/>
            <person name="Williams D."/>
            <person name="Jones T.A."/>
            <person name="She X."/>
            <person name="Ciccarelli F.D."/>
            <person name="Izaurralde E."/>
            <person name="Taylor J."/>
            <person name="Schmutz J."/>
            <person name="Myers R.M."/>
            <person name="Cox D.R."/>
            <person name="Huang X."/>
            <person name="McPherson J.D."/>
            <person name="Mardis E.R."/>
            <person name="Clifton S.W."/>
            <person name="Warren W.C."/>
            <person name="Chinwalla A.T."/>
            <person name="Eddy S.R."/>
            <person name="Marra M.A."/>
            <person name="Ovcharenko I."/>
            <person name="Furey T.S."/>
            <person name="Miller W."/>
            <person name="Eichler E.E."/>
            <person name="Bork P."/>
            <person name="Suyama M."/>
            <person name="Torrents D."/>
            <person name="Waterston R.H."/>
            <person name="Wilson R.K."/>
        </authorList>
    </citation>
    <scope>NUCLEOTIDE SEQUENCE [LARGE SCALE GENOMIC DNA]</scope>
</reference>
<reference key="6">
    <citation type="submission" date="2005-07" db="EMBL/GenBank/DDBJ databases">
        <authorList>
            <person name="Mural R.J."/>
            <person name="Istrail S."/>
            <person name="Sutton G.G."/>
            <person name="Florea L."/>
            <person name="Halpern A.L."/>
            <person name="Mobarry C.M."/>
            <person name="Lippert R."/>
            <person name="Walenz B."/>
            <person name="Shatkay H."/>
            <person name="Dew I."/>
            <person name="Miller J.R."/>
            <person name="Flanigan M.J."/>
            <person name="Edwards N.J."/>
            <person name="Bolanos R."/>
            <person name="Fasulo D."/>
            <person name="Halldorsson B.V."/>
            <person name="Hannenhalli S."/>
            <person name="Turner R."/>
            <person name="Yooseph S."/>
            <person name="Lu F."/>
            <person name="Nusskern D.R."/>
            <person name="Shue B.C."/>
            <person name="Zheng X.H."/>
            <person name="Zhong F."/>
            <person name="Delcher A.L."/>
            <person name="Huson D.H."/>
            <person name="Kravitz S.A."/>
            <person name="Mouchard L."/>
            <person name="Reinert K."/>
            <person name="Remington K.A."/>
            <person name="Clark A.G."/>
            <person name="Waterman M.S."/>
            <person name="Eichler E.E."/>
            <person name="Adams M.D."/>
            <person name="Hunkapiller M.W."/>
            <person name="Myers E.W."/>
            <person name="Venter J.C."/>
        </authorList>
    </citation>
    <scope>NUCLEOTIDE SEQUENCE [LARGE SCALE GENOMIC DNA]</scope>
    <scope>VARIANT ARG-371</scope>
</reference>
<reference key="7">
    <citation type="journal article" date="2004" name="Genome Res.">
        <title>The status, quality, and expansion of the NIH full-length cDNA project: the Mammalian Gene Collection (MGC).</title>
        <authorList>
            <consortium name="The MGC Project Team"/>
        </authorList>
    </citation>
    <scope>NUCLEOTIDE SEQUENCE [LARGE SCALE MRNA] (ISOFORM 1)</scope>
    <scope>VARIANT ARG-371</scope>
    <source>
        <tissue>Brain</tissue>
        <tissue>Muscle</tissue>
        <tissue>Skin</tissue>
    </source>
</reference>
<reference key="8">
    <citation type="journal article" date="2001" name="Genome Res.">
        <title>Towards a catalog of human genes and proteins: sequencing and analysis of 500 novel complete protein coding human cDNAs.</title>
        <authorList>
            <person name="Wiemann S."/>
            <person name="Weil B."/>
            <person name="Wellenreuther R."/>
            <person name="Gassenhuber J."/>
            <person name="Glassl S."/>
            <person name="Ansorge W."/>
            <person name="Boecher M."/>
            <person name="Bloecker H."/>
            <person name="Bauersachs S."/>
            <person name="Blum H."/>
            <person name="Lauber J."/>
            <person name="Duesterhoeft A."/>
            <person name="Beyer A."/>
            <person name="Koehrer K."/>
            <person name="Strack N."/>
            <person name="Mewes H.-W."/>
            <person name="Ottenwaelder B."/>
            <person name="Obermaier B."/>
            <person name="Tampe J."/>
            <person name="Heubner D."/>
            <person name="Wambutt R."/>
            <person name="Korn B."/>
            <person name="Klein M."/>
            <person name="Poustka A."/>
        </authorList>
    </citation>
    <scope>NUCLEOTIDE SEQUENCE [LARGE SCALE MRNA] OF 210-775</scope>
    <scope>VARIANT ARG-371</scope>
    <source>
        <tissue>Testis</tissue>
    </source>
</reference>
<reference key="9">
    <citation type="journal article" date="2012" name="Hum. Mol. Genet.">
        <title>Parkin interacts with Klokin1 for mitochondrial import and maintenance of membrane potential.</title>
        <authorList>
            <person name="Kuroda Y."/>
            <person name="Sako W."/>
            <person name="Goto S."/>
            <person name="Sawada T."/>
            <person name="Uchida D."/>
            <person name="Izumi Y."/>
            <person name="Takahashi T."/>
            <person name="Kagawa N."/>
            <person name="Matsumoto M."/>
            <person name="Matsumoto M."/>
            <person name="Takahashi R."/>
            <person name="Kaji R."/>
            <person name="Mitsui T."/>
        </authorList>
    </citation>
    <scope>ALTERNATIVE SPLICING</scope>
    <scope>FUNCTION (ISOFORM 2)</scope>
    <scope>INTERACTION WITH PRKN</scope>
    <scope>SUBCELLULAR LOCATION</scope>
    <scope>TISSUE SPECIFICITY</scope>
</reference>
<name>CHSS2_HUMAN</name>
<sequence>MRASLLLSVLRPAGPVAVGISLGFTLSLLSVTWVEEPCGPGPPQPGDSELPPRGNTNAARRPNSVQPGAEREKPGAGEGAGENWEPRVLPYHPAQPGQAAKKAVRTRYISTELGIRQRLLVAVLTSQTTLPTLGVAVNRTLGHRLERVVFLTGARGRRAPPGMAVVTLGEERPIGHLHLALRHLLEQHGDDFDWFFLVPDTTYTEAHGLARLTGHLSLASAAHLYLGRPQDFIGGEPTPGRYCHGGFGVLLSRMLLQQLRPHLEGCRNDIVSARPDEWLGRCILDATGVGCTGDHEGVHYSHLELSPGEPVQEGDPHFRSALTAHPVRDPVHMYQLHKAFARAELERTYQEIQELQWEIQNTSHLAVDGDQAAAWPVGIPAPSRPASRFEVLRWDYFTEQHAFSCADGSPRCPLRGADRADVADVLGTALEELNRRYHPALRLQKQQLVNGYRRFDPARGMEYTLDLQLEALTPQGGRRPLTRRVQLLRPLSRVEILPVPYVTEASRLTVLLPLAAAERDLAPGFLEAFATAALEPGDAAAALTLLLLYEPRQAQRVAHADVFAPVKAHVAELERRFPGARVPWLSVQTAAPSPLRLMDLLSKKHPLDTLFLLAGPDTVLTPDFLNRCRMHAISGWQAFFPMHFQAFHPAVAPPQGPGPPELGRDTGRFDRQAASEACFYNSDYVAARGRLAAASEQEEELLESLDVYELFLHFSSLHVLRAVEPALLQRYRAQTCSARLSEDLYHRCLQSVLEGLGSRTQLAMLLFEQEQGNST</sequence>
<organism>
    <name type="scientific">Homo sapiens</name>
    <name type="common">Human</name>
    <dbReference type="NCBI Taxonomy" id="9606"/>
    <lineage>
        <taxon>Eukaryota</taxon>
        <taxon>Metazoa</taxon>
        <taxon>Chordata</taxon>
        <taxon>Craniata</taxon>
        <taxon>Vertebrata</taxon>
        <taxon>Euteleostomi</taxon>
        <taxon>Mammalia</taxon>
        <taxon>Eutheria</taxon>
        <taxon>Euarchontoglires</taxon>
        <taxon>Primates</taxon>
        <taxon>Haplorrhini</taxon>
        <taxon>Catarrhini</taxon>
        <taxon>Hominidae</taxon>
        <taxon>Homo</taxon>
    </lineage>
</organism>
<protein>
    <recommendedName>
        <fullName evidence="12">Chondroitin sulfate synthase 2</fullName>
        <ecNumber evidence="5">2.4.1.175</ecNumber>
        <ecNumber evidence="5">2.4.1.226</ecNumber>
    </recommendedName>
    <alternativeName>
        <fullName>Chondroitin glucuronyltransferase 2</fullName>
    </alternativeName>
    <alternativeName>
        <fullName>Chondroitin-polymerizing factor</fullName>
        <shortName>ChPF</shortName>
    </alternativeName>
    <alternativeName>
        <fullName>Glucuronosyl-N-acetylgalactosaminyl-proteoglycan 4-beta-N-acetylgalactosaminyltransferase II</fullName>
    </alternativeName>
    <alternativeName>
        <fullName>N-acetylgalactosaminyl-proteoglycan 3-beta-glucuronosyltransferase II</fullName>
    </alternativeName>
    <alternativeName>
        <fullName>N-acetylgalactosaminyltransferase 2</fullName>
    </alternativeName>
</protein>
<comment type="function">
    <text evidence="4 5">Has both beta-1,3-glucuronic acid and beta-1,4-N-acetylgalactosamine transferase activity. Transfers glucuronic acid (GlcUA) from UDP-GlcUA and N-acetylgalactosamine (GalNAc) from UDP-GalNAc to the non-reducing end of the elongating chondroitin polymer. Seems to act as a specific activating factor for CHSY1 in chondroitin polymerization (PubMed:12716890).</text>
</comment>
<comment type="function">
    <molecule>Isoform 2</molecule>
    <text evidence="9">May facilitate PRKN transport into the mitochondria. In collaboration with PRKN, may enhance cell viability and protect cells from oxidative stress.</text>
</comment>
<comment type="catalytic activity">
    <reaction evidence="5">
        <text>3-O-(beta-D-GlcA-(1-&gt;3)-beta-D-GalNAc-(1-&gt;4)-beta-D-GlcA-(1-&gt;3)-beta-D-Gal-(1-&gt;3)-beta-D-Gal-(1-&gt;4)-beta-D-Xyl)-L-seryl-[protein] + UDP-N-acetyl-alpha-D-galactosamine = 3-O-(beta-D-GalNAc-(1-&gt;4)-beta-D-GlcA-(1-&gt;3)-beta-D-GalNAc-(1-&gt;4)-beta-D-GlcA-(1-&gt;3)-beta-D-Gal-(1-&gt;3)-beta-D-Gal-(1-&gt;4)-beta-D-Xyl)-L-seryl-[protein] + UDP + H(+)</text>
        <dbReference type="Rhea" id="RHEA:20800"/>
        <dbReference type="Rhea" id="RHEA-COMP:14058"/>
        <dbReference type="Rhea" id="RHEA-COMP:14059"/>
        <dbReference type="ChEBI" id="CHEBI:15378"/>
        <dbReference type="ChEBI" id="CHEBI:58223"/>
        <dbReference type="ChEBI" id="CHEBI:67138"/>
        <dbReference type="ChEBI" id="CHEBI:138442"/>
        <dbReference type="ChEBI" id="CHEBI:138443"/>
        <dbReference type="EC" id="2.4.1.175"/>
    </reaction>
    <physiologicalReaction direction="left-to-right" evidence="13">
        <dbReference type="Rhea" id="RHEA:20801"/>
    </physiologicalReaction>
</comment>
<comment type="catalytic activity">
    <reaction evidence="5">
        <text>3-O-{beta-D-GlcA-(1-&gt;3)-[beta-D-GalNAc-(1-&gt;4)-beta-D-GlcA-(1-&gt;3)](n)-beta-D-GalNAc-(1-&gt;4)-beta-D-GlcA-(1-&gt;3)-beta-D-Gal-(1-&gt;3)-beta-D-Gal-(1-&gt;4)-beta-D-Xyl}-L-seryl-[protein] + UDP-N-acetyl-alpha-D-galactosamine = 3-O-{[beta-D-GalNAc-(1-&gt;4)-beta-D-GlcA-(1-&gt;3)](n+1)-beta-D-GalNAc-(1-&gt;4)-beta-D-GlcA-(1-&gt;3)-beta-D-Gal-(1-&gt;3)-beta-D-Gal-(1-&gt;4)-beta-D-Xyl}-L-seryl-[protein] + UDP + H(+)</text>
        <dbReference type="Rhea" id="RHEA:55000"/>
        <dbReference type="Rhea" id="RHEA-COMP:14060"/>
        <dbReference type="Rhea" id="RHEA-COMP:14301"/>
        <dbReference type="ChEBI" id="CHEBI:15378"/>
        <dbReference type="ChEBI" id="CHEBI:58223"/>
        <dbReference type="ChEBI" id="CHEBI:67138"/>
        <dbReference type="ChEBI" id="CHEBI:138444"/>
        <dbReference type="ChEBI" id="CHEBI:138445"/>
        <dbReference type="EC" id="2.4.1.175"/>
    </reaction>
    <physiologicalReaction direction="left-to-right" evidence="13">
        <dbReference type="Rhea" id="RHEA:55001"/>
    </physiologicalReaction>
</comment>
<comment type="catalytic activity">
    <reaction evidence="5">
        <text>3-O-(beta-D-GalNAc-(1-&gt;4)-beta-D-GlcA-(1-&gt;3)-beta-D-Gal-(1-&gt;3)-beta-D-Gal-(1-&gt;4)-beta-D-Xyl)-L-seryl-[protein] + UDP-alpha-D-glucuronate = 3-O-(beta-D-GlcA-(1-&gt;3)-beta-D-GalNAc-(1-&gt;4)-beta-D-GlcA-(1-&gt;3)-beta-D-Gal-(1-&gt;3)-beta-D-Gal-(1-&gt;4)-beta-D-Xyl)-L-seryl-[protein] + UDP + H(+)</text>
        <dbReference type="Rhea" id="RHEA:23428"/>
        <dbReference type="Rhea" id="RHEA-COMP:12575"/>
        <dbReference type="Rhea" id="RHEA-COMP:14058"/>
        <dbReference type="ChEBI" id="CHEBI:15378"/>
        <dbReference type="ChEBI" id="CHEBI:58052"/>
        <dbReference type="ChEBI" id="CHEBI:58223"/>
        <dbReference type="ChEBI" id="CHEBI:132105"/>
        <dbReference type="ChEBI" id="CHEBI:138442"/>
        <dbReference type="EC" id="2.4.1.226"/>
    </reaction>
    <physiologicalReaction direction="left-to-right" evidence="13">
        <dbReference type="Rhea" id="RHEA:23429"/>
    </physiologicalReaction>
</comment>
<comment type="catalytic activity">
    <reaction evidence="5">
        <text>3-O-{[beta-D-GalNAc-(1-&gt;4)-beta-D-GlcA-(1-&gt;3)](n)-beta-D-GalNAc-(1-&gt;4)-beta-D-GlcA-(1-&gt;3)-beta-D-Gal-(1-&gt;3)-beta-D-Gal-(1-&gt;4)-beta-D-Xyl}-L-seryl-[protein] + UDP-alpha-D-glucuronate = 3-O-{beta-D-GlcA-(1-&gt;3)-[beta-D-GalNAc-(1-&gt;4)-beta-D-GlcA-(1-&gt;3)](n)-beta-D-GalNAc-(1-&gt;4)-beta-D-GlcA-(1-&gt;3)-beta-D-Gal-(1-&gt;3)-beta-D-Gal-(1-&gt;4)-beta-D-Xyl}-L-seryl-[protein] + UDP + H(+)</text>
        <dbReference type="Rhea" id="RHEA:54996"/>
        <dbReference type="Rhea" id="RHEA-COMP:14060"/>
        <dbReference type="Rhea" id="RHEA-COMP:14061"/>
        <dbReference type="ChEBI" id="CHEBI:15378"/>
        <dbReference type="ChEBI" id="CHEBI:58052"/>
        <dbReference type="ChEBI" id="CHEBI:58223"/>
        <dbReference type="ChEBI" id="CHEBI:138444"/>
        <dbReference type="ChEBI" id="CHEBI:138445"/>
        <dbReference type="EC" id="2.4.1.226"/>
    </reaction>
    <physiologicalReaction direction="left-to-right" evidence="13">
        <dbReference type="Rhea" id="RHEA:54997"/>
    </physiologicalReaction>
</comment>
<comment type="cofactor">
    <cofactor evidence="5">
        <name>Mn(2+)</name>
        <dbReference type="ChEBI" id="CHEBI:29035"/>
    </cofactor>
    <cofactor evidence="5">
        <name>Co(2+)</name>
        <dbReference type="ChEBI" id="CHEBI:48828"/>
    </cofactor>
    <text evidence="5">Highest activities are measured with Mn(2+). Can also utilize Co(2+).</text>
</comment>
<comment type="subunit">
    <molecule>Isoform 1</molecule>
    <text evidence="9">Interacts with PRKN.</text>
</comment>
<comment type="subunit">
    <molecule>Isoform 2</molecule>
    <text evidence="9">Interacts with PRKN.</text>
</comment>
<comment type="subunit">
    <molecule>Isoform 3</molecule>
    <text evidence="9">Interacts with PRKN.</text>
</comment>
<comment type="interaction">
    <interactant intactId="EBI-9029620">
        <id>Q8IZ52-2</id>
    </interactant>
    <interactant intactId="EBI-716346">
        <id>O60260</id>
        <label>PRKN</label>
    </interactant>
    <organismsDiffer>false</organismsDiffer>
    <experiments>5</experiments>
</comment>
<comment type="subcellular location">
    <molecule>Isoform 1</molecule>
    <subcellularLocation>
        <location evidence="12">Golgi apparatus</location>
        <location evidence="12">Golgi stack membrane</location>
        <topology evidence="12">Single-pass type II membrane protein</topology>
    </subcellularLocation>
    <subcellularLocation>
        <location evidence="9">Cytoplasm</location>
        <location evidence="9">Cytosol</location>
    </subcellularLocation>
</comment>
<comment type="subcellular location">
    <molecule>Isoform 3</molecule>
    <subcellularLocation>
        <location evidence="9">Cytoplasm</location>
        <location evidence="9">Cytosol</location>
    </subcellularLocation>
    <subcellularLocation>
        <location evidence="9">Mitochondrion</location>
    </subcellularLocation>
</comment>
<comment type="subcellular location">
    <molecule>Isoform 2</molecule>
    <subcellularLocation>
        <location evidence="9">Mitochondrion matrix</location>
    </subcellularLocation>
</comment>
<comment type="alternative products">
    <event type="alternative splicing"/>
    <isoform>
        <id>Q8IZ52-1</id>
        <name>1</name>
        <sequence type="displayed"/>
    </isoform>
    <isoform>
        <id>Q8IZ52-2</id>
        <name>2</name>
        <name>Klokin1</name>
        <sequence type="described" ref="VSP_053433"/>
    </isoform>
    <isoform>
        <id>Q8IZ52-4</id>
        <name>3</name>
        <name>ChPF(D996)</name>
        <sequence type="described" ref="VSP_053434"/>
    </isoform>
</comment>
<comment type="tissue specificity">
    <text evidence="4 5">Ubiquitous. Highly expressed in pancreas, ovary, brain, heart, skeletal muscle, colon, kidney, liver, stomach, spleen and placenta.</text>
</comment>
<comment type="tissue specificity">
    <molecule>Isoform 2</molecule>
    <text evidence="9">Expressed in brain, spleen, ovary, testis, lung and peripheral mononuclear cells.</text>
</comment>
<comment type="tissue specificity">
    <molecule>Isoform 3</molecule>
    <text evidence="9">Also ubiquitous.</text>
</comment>
<comment type="similarity">
    <text evidence="12">Belongs to the chondroitin N-acetylgalactosaminyltransferase family.</text>
</comment>
<feature type="chain" id="PRO_0000189560" description="Chondroitin sulfate synthase 2">
    <location>
        <begin position="1"/>
        <end position="775"/>
    </location>
</feature>
<feature type="topological domain" description="Cytoplasmic" evidence="1">
    <location>
        <begin position="1"/>
        <end position="15"/>
    </location>
</feature>
<feature type="transmembrane region" description="Helical; Signal-anchor for type II membrane protein" evidence="1">
    <location>
        <begin position="16"/>
        <end position="34"/>
    </location>
</feature>
<feature type="topological domain" description="Lumenal" evidence="1">
    <location>
        <begin position="35"/>
        <end position="775"/>
    </location>
</feature>
<feature type="region of interest" description="Disordered" evidence="2">
    <location>
        <begin position="37"/>
        <end position="100"/>
    </location>
</feature>
<feature type="compositionally biased region" description="Polar residues" evidence="2">
    <location>
        <begin position="54"/>
        <end position="66"/>
    </location>
</feature>
<feature type="binding site" evidence="1">
    <location>
        <position position="617"/>
    </location>
    <ligand>
        <name>a divalent metal cation</name>
        <dbReference type="ChEBI" id="CHEBI:60240"/>
    </ligand>
</feature>
<feature type="glycosylation site" description="N-linked (GlcNAc...) asparagine" evidence="1">
    <location>
        <position position="138"/>
    </location>
</feature>
<feature type="glycosylation site" description="N-linked (GlcNAc...) asparagine" evidence="1">
    <location>
        <position position="361"/>
    </location>
</feature>
<feature type="splice variant" id="VSP_053433" description="In isoform 2." evidence="11">
    <location>
        <begin position="1"/>
        <end position="460"/>
    </location>
</feature>
<feature type="splice variant" id="VSP_053434" description="In isoform 3." evidence="11">
    <location>
        <begin position="1"/>
        <end position="162"/>
    </location>
</feature>
<feature type="sequence variant" id="VAR_047394" description="In dbSNP:rs6436155." evidence="3 4 5 6 7 8 10">
    <original>Q</original>
    <variation>R</variation>
    <location>
        <position position="371"/>
    </location>
</feature>
<feature type="sequence conflict" description="In Ref. 3; AAQ88769." evidence="12" ref="3">
    <original>A</original>
    <variation>G</variation>
    <location>
        <position position="650"/>
    </location>
</feature>
<gene>
    <name evidence="14" type="primary">CHPF</name>
    <name type="synonym">CSS2</name>
    <name type="ORF">UNQ651/PRO1281</name>
</gene>
<dbReference type="EC" id="2.4.1.175" evidence="5"/>
<dbReference type="EC" id="2.4.1.226" evidence="5"/>
<dbReference type="EMBL" id="AB095813">
    <property type="protein sequence ID" value="BAC78393.1"/>
    <property type="molecule type" value="mRNA"/>
</dbReference>
<dbReference type="EMBL" id="AB086063">
    <property type="protein sequence ID" value="BAC81536.1"/>
    <property type="molecule type" value="mRNA"/>
</dbReference>
<dbReference type="EMBL" id="AY358403">
    <property type="protein sequence ID" value="AAQ88769.1"/>
    <property type="molecule type" value="mRNA"/>
</dbReference>
<dbReference type="EMBL" id="AK026331">
    <property type="protein sequence ID" value="BAB15449.1"/>
    <property type="molecule type" value="mRNA"/>
</dbReference>
<dbReference type="EMBL" id="AK302124">
    <property type="protein sequence ID" value="BAG63502.1"/>
    <property type="molecule type" value="mRNA"/>
</dbReference>
<dbReference type="EMBL" id="AC009955">
    <property type="status" value="NOT_ANNOTATED_CDS"/>
    <property type="molecule type" value="Genomic_DNA"/>
</dbReference>
<dbReference type="EMBL" id="CH471063">
    <property type="protein sequence ID" value="EAW70768.1"/>
    <property type="molecule type" value="Genomic_DNA"/>
</dbReference>
<dbReference type="EMBL" id="BC008878">
    <property type="protein sequence ID" value="AAH08878.2"/>
    <property type="molecule type" value="mRNA"/>
</dbReference>
<dbReference type="EMBL" id="BC021223">
    <property type="protein sequence ID" value="AAH21223.2"/>
    <property type="molecule type" value="mRNA"/>
</dbReference>
<dbReference type="EMBL" id="BC023531">
    <property type="protein sequence ID" value="AAH23531.1"/>
    <property type="molecule type" value="mRNA"/>
</dbReference>
<dbReference type="EMBL" id="AL136814">
    <property type="protein sequence ID" value="CAB66748.2"/>
    <property type="molecule type" value="mRNA"/>
</dbReference>
<dbReference type="CCDS" id="CCDS2443.1">
    <molecule id="Q8IZ52-1"/>
</dbReference>
<dbReference type="CCDS" id="CCDS56169.1">
    <molecule id="Q8IZ52-4"/>
</dbReference>
<dbReference type="RefSeq" id="NP_001182660.2">
    <molecule id="Q8IZ52-4"/>
    <property type="nucleotide sequence ID" value="NM_001195731.2"/>
</dbReference>
<dbReference type="RefSeq" id="NP_078812.2">
    <molecule id="Q8IZ52-1"/>
    <property type="nucleotide sequence ID" value="NM_024536.5"/>
</dbReference>
<dbReference type="SMR" id="Q8IZ52"/>
<dbReference type="BioGRID" id="122729">
    <property type="interactions" value="79"/>
</dbReference>
<dbReference type="FunCoup" id="Q8IZ52">
    <property type="interactions" value="630"/>
</dbReference>
<dbReference type="IntAct" id="Q8IZ52">
    <property type="interactions" value="30"/>
</dbReference>
<dbReference type="MINT" id="Q8IZ52"/>
<dbReference type="STRING" id="9606.ENSP00000243776"/>
<dbReference type="CAZy" id="GT31">
    <property type="family name" value="Glycosyltransferase Family 31"/>
</dbReference>
<dbReference type="CAZy" id="GT7">
    <property type="family name" value="Glycosyltransferase Family 7"/>
</dbReference>
<dbReference type="GlyCosmos" id="Q8IZ52">
    <property type="glycosylation" value="2 sites, No reported glycans"/>
</dbReference>
<dbReference type="GlyGen" id="Q8IZ52">
    <property type="glycosylation" value="5 sites, 2 N-linked glycans (2 sites), 1 O-linked glycan (1 site)"/>
</dbReference>
<dbReference type="iPTMnet" id="Q8IZ52"/>
<dbReference type="PhosphoSitePlus" id="Q8IZ52"/>
<dbReference type="SwissPalm" id="Q8IZ52"/>
<dbReference type="BioMuta" id="CHPF"/>
<dbReference type="DMDM" id="311033361"/>
<dbReference type="jPOST" id="Q8IZ52"/>
<dbReference type="MassIVE" id="Q8IZ52"/>
<dbReference type="PaxDb" id="9606-ENSP00000243776"/>
<dbReference type="PeptideAtlas" id="Q8IZ52"/>
<dbReference type="ProteomicsDB" id="71279">
    <molecule id="Q8IZ52-1"/>
</dbReference>
<dbReference type="Pumba" id="Q8IZ52"/>
<dbReference type="Antibodypedia" id="34339">
    <property type="antibodies" value="195 antibodies from 28 providers"/>
</dbReference>
<dbReference type="DNASU" id="79586"/>
<dbReference type="Ensembl" id="ENST00000243776.11">
    <molecule id="Q8IZ52-1"/>
    <property type="protein sequence ID" value="ENSP00000243776.6"/>
    <property type="gene ID" value="ENSG00000123989.15"/>
</dbReference>
<dbReference type="Ensembl" id="ENST00000535926.3">
    <molecule id="Q8IZ52-4"/>
    <property type="protein sequence ID" value="ENSP00000445571.1"/>
    <property type="gene ID" value="ENSG00000123989.15"/>
</dbReference>
<dbReference type="GeneID" id="79586"/>
<dbReference type="KEGG" id="hsa:79586"/>
<dbReference type="MANE-Select" id="ENST00000243776.11">
    <property type="protein sequence ID" value="ENSP00000243776.6"/>
    <property type="RefSeq nucleotide sequence ID" value="NM_024536.6"/>
    <property type="RefSeq protein sequence ID" value="NP_078812.3"/>
</dbReference>
<dbReference type="UCSC" id="uc002vmc.5">
    <molecule id="Q8IZ52-1"/>
    <property type="organism name" value="human"/>
</dbReference>
<dbReference type="AGR" id="HGNC:24291"/>
<dbReference type="CTD" id="79586"/>
<dbReference type="DisGeNET" id="79586"/>
<dbReference type="GeneCards" id="CHPF"/>
<dbReference type="HGNC" id="HGNC:24291">
    <property type="gene designation" value="CHPF"/>
</dbReference>
<dbReference type="HPA" id="ENSG00000123989">
    <property type="expression patterns" value="Low tissue specificity"/>
</dbReference>
<dbReference type="MIM" id="610405">
    <property type="type" value="gene"/>
</dbReference>
<dbReference type="neXtProt" id="NX_Q8IZ52"/>
<dbReference type="OpenTargets" id="ENSG00000123989"/>
<dbReference type="PharmGKB" id="PA162382245"/>
<dbReference type="VEuPathDB" id="HostDB:ENSG00000123989"/>
<dbReference type="eggNOG" id="KOG3708">
    <property type="taxonomic scope" value="Eukaryota"/>
</dbReference>
<dbReference type="GeneTree" id="ENSGT01050000244857"/>
<dbReference type="HOGENOM" id="CLU_016244_1_0_1"/>
<dbReference type="InParanoid" id="Q8IZ52"/>
<dbReference type="OMA" id="MEGKYCY"/>
<dbReference type="OrthoDB" id="9985088at2759"/>
<dbReference type="PAN-GO" id="Q8IZ52">
    <property type="GO annotations" value="2 GO annotations based on evolutionary models"/>
</dbReference>
<dbReference type="PhylomeDB" id="Q8IZ52"/>
<dbReference type="TreeFam" id="TF318303"/>
<dbReference type="BioCyc" id="MetaCyc:HS13103-MONOMER"/>
<dbReference type="BRENDA" id="2.4.1.175">
    <property type="organism ID" value="2681"/>
</dbReference>
<dbReference type="BRENDA" id="2.4.1.226">
    <property type="organism ID" value="2681"/>
</dbReference>
<dbReference type="PathwayCommons" id="Q8IZ52"/>
<dbReference type="Reactome" id="R-HSA-2022870">
    <property type="pathway name" value="Chondroitin sulfate biosynthesis"/>
</dbReference>
<dbReference type="SignaLink" id="Q8IZ52"/>
<dbReference type="BioGRID-ORCS" id="79586">
    <property type="hits" value="16 hits in 1164 CRISPR screens"/>
</dbReference>
<dbReference type="ChiTaRS" id="CHPF">
    <property type="organism name" value="human"/>
</dbReference>
<dbReference type="GeneWiki" id="CHPF"/>
<dbReference type="GenomeRNAi" id="79586"/>
<dbReference type="Pharos" id="Q8IZ52">
    <property type="development level" value="Tbio"/>
</dbReference>
<dbReference type="PRO" id="PR:Q8IZ52"/>
<dbReference type="Proteomes" id="UP000005640">
    <property type="component" value="Chromosome 2"/>
</dbReference>
<dbReference type="RNAct" id="Q8IZ52">
    <property type="molecule type" value="protein"/>
</dbReference>
<dbReference type="Bgee" id="ENSG00000123989">
    <property type="expression patterns" value="Expressed in decidua and 161 other cell types or tissues"/>
</dbReference>
<dbReference type="ExpressionAtlas" id="Q8IZ52">
    <property type="expression patterns" value="baseline and differential"/>
</dbReference>
<dbReference type="GO" id="GO:0005829">
    <property type="term" value="C:cytosol"/>
    <property type="evidence" value="ECO:0007669"/>
    <property type="project" value="UniProtKB-SubCell"/>
</dbReference>
<dbReference type="GO" id="GO:0032580">
    <property type="term" value="C:Golgi cisterna membrane"/>
    <property type="evidence" value="ECO:0007669"/>
    <property type="project" value="UniProtKB-SubCell"/>
</dbReference>
<dbReference type="GO" id="GO:0000139">
    <property type="term" value="C:Golgi membrane"/>
    <property type="evidence" value="ECO:0000304"/>
    <property type="project" value="Reactome"/>
</dbReference>
<dbReference type="GO" id="GO:0005759">
    <property type="term" value="C:mitochondrial matrix"/>
    <property type="evidence" value="ECO:0007669"/>
    <property type="project" value="UniProtKB-SubCell"/>
</dbReference>
<dbReference type="GO" id="GO:0047238">
    <property type="term" value="F:glucuronosyl-N-acetylgalactosaminyl-proteoglycan 4-beta-N-acetylgalactosaminyltransferase activity"/>
    <property type="evidence" value="ECO:0000314"/>
    <property type="project" value="FlyBase"/>
</dbReference>
<dbReference type="GO" id="GO:0046872">
    <property type="term" value="F:metal ion binding"/>
    <property type="evidence" value="ECO:0007669"/>
    <property type="project" value="UniProtKB-KW"/>
</dbReference>
<dbReference type="GO" id="GO:0050510">
    <property type="term" value="F:N-acetylgalactosaminyl-proteoglycan 3-beta-glucuronosyltransferase activity"/>
    <property type="evidence" value="ECO:0000314"/>
    <property type="project" value="FlyBase"/>
</dbReference>
<dbReference type="GO" id="GO:0050650">
    <property type="term" value="P:chondroitin sulfate proteoglycan biosynthetic process"/>
    <property type="evidence" value="ECO:0000314"/>
    <property type="project" value="FlyBase"/>
</dbReference>
<dbReference type="FunFam" id="3.90.550.50:FF:000004">
    <property type="entry name" value="Hexosyltransferase"/>
    <property type="match status" value="1"/>
</dbReference>
<dbReference type="Gene3D" id="3.90.550.50">
    <property type="match status" value="1"/>
</dbReference>
<dbReference type="InterPro" id="IPR008428">
    <property type="entry name" value="Chond_GalNAc"/>
</dbReference>
<dbReference type="InterPro" id="IPR051227">
    <property type="entry name" value="CS_glycosyltransferase"/>
</dbReference>
<dbReference type="PANTHER" id="PTHR12369:SF22">
    <property type="entry name" value="CHONDROITIN SULFATE SYNTHASE 2"/>
    <property type="match status" value="1"/>
</dbReference>
<dbReference type="PANTHER" id="PTHR12369">
    <property type="entry name" value="CHONDROITIN SYNTHASE"/>
    <property type="match status" value="1"/>
</dbReference>
<dbReference type="Pfam" id="PF05679">
    <property type="entry name" value="CHGN"/>
    <property type="match status" value="1"/>
</dbReference>